<keyword id="KW-0489">Methyltransferase</keyword>
<keyword id="KW-1185">Reference proteome</keyword>
<keyword id="KW-0949">S-adenosyl-L-methionine</keyword>
<keyword id="KW-0808">Transferase</keyword>
<name>PRMC_THEYD</name>
<accession>B5YIQ8</accession>
<organism>
    <name type="scientific">Thermodesulfovibrio yellowstonii (strain ATCC 51303 / DSM 11347 / YP87)</name>
    <dbReference type="NCBI Taxonomy" id="289376"/>
    <lineage>
        <taxon>Bacteria</taxon>
        <taxon>Pseudomonadati</taxon>
        <taxon>Nitrospirota</taxon>
        <taxon>Thermodesulfovibrionia</taxon>
        <taxon>Thermodesulfovibrionales</taxon>
        <taxon>Thermodesulfovibrionaceae</taxon>
        <taxon>Thermodesulfovibrio</taxon>
    </lineage>
</organism>
<proteinExistence type="inferred from homology"/>
<evidence type="ECO:0000255" key="1">
    <source>
        <dbReference type="HAMAP-Rule" id="MF_02126"/>
    </source>
</evidence>
<feature type="chain" id="PRO_0000414546" description="Release factor glutamine methyltransferase">
    <location>
        <begin position="1"/>
        <end position="279"/>
    </location>
</feature>
<feature type="binding site" evidence="1">
    <location>
        <position position="139"/>
    </location>
    <ligand>
        <name>S-adenosyl-L-methionine</name>
        <dbReference type="ChEBI" id="CHEBI:59789"/>
    </ligand>
</feature>
<feature type="binding site" evidence="1">
    <location>
        <begin position="182"/>
        <end position="185"/>
    </location>
    <ligand>
        <name>substrate</name>
    </ligand>
</feature>
<feature type="binding site" evidence="1">
    <location>
        <position position="182"/>
    </location>
    <ligand>
        <name>S-adenosyl-L-methionine</name>
        <dbReference type="ChEBI" id="CHEBI:59789"/>
    </ligand>
</feature>
<gene>
    <name evidence="1" type="primary">prmC</name>
    <name type="ordered locus">THEYE_A0370</name>
</gene>
<reference key="1">
    <citation type="submission" date="2008-08" db="EMBL/GenBank/DDBJ databases">
        <title>The complete genome sequence of Thermodesulfovibrio yellowstonii strain ATCC 51303 / DSM 11347 / YP87.</title>
        <authorList>
            <person name="Dodson R.J."/>
            <person name="Durkin A.S."/>
            <person name="Wu M."/>
            <person name="Eisen J."/>
            <person name="Sutton G."/>
        </authorList>
    </citation>
    <scope>NUCLEOTIDE SEQUENCE [LARGE SCALE GENOMIC DNA]</scope>
    <source>
        <strain>ATCC 51303 / DSM 11347 / YP87</strain>
    </source>
</reference>
<comment type="function">
    <text evidence="1">Methylates the class 1 translation termination release factors RF1/PrfA and RF2/PrfB on the glutamine residue of the universally conserved GGQ motif.</text>
</comment>
<comment type="catalytic activity">
    <reaction evidence="1">
        <text>L-glutaminyl-[peptide chain release factor] + S-adenosyl-L-methionine = N(5)-methyl-L-glutaminyl-[peptide chain release factor] + S-adenosyl-L-homocysteine + H(+)</text>
        <dbReference type="Rhea" id="RHEA:42896"/>
        <dbReference type="Rhea" id="RHEA-COMP:10271"/>
        <dbReference type="Rhea" id="RHEA-COMP:10272"/>
        <dbReference type="ChEBI" id="CHEBI:15378"/>
        <dbReference type="ChEBI" id="CHEBI:30011"/>
        <dbReference type="ChEBI" id="CHEBI:57856"/>
        <dbReference type="ChEBI" id="CHEBI:59789"/>
        <dbReference type="ChEBI" id="CHEBI:61891"/>
        <dbReference type="EC" id="2.1.1.297"/>
    </reaction>
</comment>
<comment type="similarity">
    <text evidence="1">Belongs to the protein N5-glutamine methyltransferase family. PrmC subfamily.</text>
</comment>
<sequence>MKALDKIREIVNKFSFNIREAQEIICHVLKIDKIQLYTENPEITSEQAHTIKSLIERRLKKEPLQYIIGECYFYNIKIKVGRGVLIPRPETEILVEQVLERQKLISNTGNRILDLCTGSGCIALAIGKNAPEFQIFGIDKSEKAVKYATENKALNNIKNVIFLVGDMFNPFKEKIFACITANPPYVKTDEISKLQPEIKNYEPLEALNGGEDGLNFYRKIIENAEKYLLNSGLIFLEIGQGQAKAVQNIALMSGFNVIEVVKDIAGIDRVMILQKSKSL</sequence>
<protein>
    <recommendedName>
        <fullName evidence="1">Release factor glutamine methyltransferase</fullName>
        <shortName evidence="1">RF MTase</shortName>
        <ecNumber evidence="1">2.1.1.297</ecNumber>
    </recommendedName>
    <alternativeName>
        <fullName evidence="1">N5-glutamine methyltransferase PrmC</fullName>
    </alternativeName>
    <alternativeName>
        <fullName evidence="1">Protein-(glutamine-N5) MTase PrmC</fullName>
    </alternativeName>
    <alternativeName>
        <fullName evidence="1">Protein-glutamine N-methyltransferase PrmC</fullName>
    </alternativeName>
</protein>
<dbReference type="EC" id="2.1.1.297" evidence="1"/>
<dbReference type="EMBL" id="CP001147">
    <property type="protein sequence ID" value="ACI22032.1"/>
    <property type="molecule type" value="Genomic_DNA"/>
</dbReference>
<dbReference type="RefSeq" id="WP_012546726.1">
    <property type="nucleotide sequence ID" value="NC_011296.1"/>
</dbReference>
<dbReference type="RefSeq" id="YP_002248217.1">
    <property type="nucleotide sequence ID" value="NC_011296.1"/>
</dbReference>
<dbReference type="SMR" id="B5YIQ8"/>
<dbReference type="FunCoup" id="B5YIQ8">
    <property type="interactions" value="372"/>
</dbReference>
<dbReference type="STRING" id="289376.THEYE_A0370"/>
<dbReference type="EnsemblBacteria" id="ACI22032">
    <property type="protein sequence ID" value="ACI22032"/>
    <property type="gene ID" value="THEYE_A0370"/>
</dbReference>
<dbReference type="KEGG" id="tye:THEYE_A0370"/>
<dbReference type="PATRIC" id="fig|289376.4.peg.363"/>
<dbReference type="eggNOG" id="COG2890">
    <property type="taxonomic scope" value="Bacteria"/>
</dbReference>
<dbReference type="HOGENOM" id="CLU_018398_3_2_0"/>
<dbReference type="InParanoid" id="B5YIQ8"/>
<dbReference type="OrthoDB" id="9800643at2"/>
<dbReference type="Proteomes" id="UP000000718">
    <property type="component" value="Chromosome"/>
</dbReference>
<dbReference type="GO" id="GO:0102559">
    <property type="term" value="F:protein-(glutamine-N5) methyltransferase activity"/>
    <property type="evidence" value="ECO:0007669"/>
    <property type="project" value="UniProtKB-EC"/>
</dbReference>
<dbReference type="GO" id="GO:0036009">
    <property type="term" value="F:protein-glutamine N-methyltransferase activity"/>
    <property type="evidence" value="ECO:0000318"/>
    <property type="project" value="GO_Central"/>
</dbReference>
<dbReference type="GO" id="GO:0032259">
    <property type="term" value="P:methylation"/>
    <property type="evidence" value="ECO:0007669"/>
    <property type="project" value="UniProtKB-KW"/>
</dbReference>
<dbReference type="GO" id="GO:0006415">
    <property type="term" value="P:translational termination"/>
    <property type="evidence" value="ECO:0000318"/>
    <property type="project" value="GO_Central"/>
</dbReference>
<dbReference type="CDD" id="cd02440">
    <property type="entry name" value="AdoMet_MTases"/>
    <property type="match status" value="1"/>
</dbReference>
<dbReference type="Gene3D" id="1.10.8.10">
    <property type="entry name" value="DNA helicase RuvA subunit, C-terminal domain"/>
    <property type="match status" value="1"/>
</dbReference>
<dbReference type="Gene3D" id="3.40.50.150">
    <property type="entry name" value="Vaccinia Virus protein VP39"/>
    <property type="match status" value="1"/>
</dbReference>
<dbReference type="HAMAP" id="MF_02126">
    <property type="entry name" value="RF_methyltr_PrmC"/>
    <property type="match status" value="1"/>
</dbReference>
<dbReference type="InterPro" id="IPR004556">
    <property type="entry name" value="HemK-like"/>
</dbReference>
<dbReference type="InterPro" id="IPR050320">
    <property type="entry name" value="N5-glutamine_MTase"/>
</dbReference>
<dbReference type="InterPro" id="IPR040758">
    <property type="entry name" value="PrmC_N"/>
</dbReference>
<dbReference type="InterPro" id="IPR019874">
    <property type="entry name" value="RF_methyltr_PrmC"/>
</dbReference>
<dbReference type="InterPro" id="IPR029063">
    <property type="entry name" value="SAM-dependent_MTases_sf"/>
</dbReference>
<dbReference type="InterPro" id="IPR007848">
    <property type="entry name" value="Small_mtfrase_dom"/>
</dbReference>
<dbReference type="NCBIfam" id="TIGR00536">
    <property type="entry name" value="hemK_fam"/>
    <property type="match status" value="1"/>
</dbReference>
<dbReference type="NCBIfam" id="TIGR03534">
    <property type="entry name" value="RF_mod_PrmC"/>
    <property type="match status" value="1"/>
</dbReference>
<dbReference type="PANTHER" id="PTHR18895">
    <property type="entry name" value="HEMK METHYLTRANSFERASE"/>
    <property type="match status" value="1"/>
</dbReference>
<dbReference type="PANTHER" id="PTHR18895:SF74">
    <property type="entry name" value="MTRF1L RELEASE FACTOR GLUTAMINE METHYLTRANSFERASE"/>
    <property type="match status" value="1"/>
</dbReference>
<dbReference type="Pfam" id="PF05175">
    <property type="entry name" value="MTS"/>
    <property type="match status" value="1"/>
</dbReference>
<dbReference type="Pfam" id="PF17827">
    <property type="entry name" value="PrmC_N"/>
    <property type="match status" value="1"/>
</dbReference>
<dbReference type="SUPFAM" id="SSF53335">
    <property type="entry name" value="S-adenosyl-L-methionine-dependent methyltransferases"/>
    <property type="match status" value="1"/>
</dbReference>